<dbReference type="EC" id="6.3.1.2" evidence="3"/>
<dbReference type="EMBL" id="X67296">
    <property type="protein sequence ID" value="CAA47710.1"/>
    <property type="molecule type" value="Genomic_DNA"/>
</dbReference>
<dbReference type="PIR" id="S26216">
    <property type="entry name" value="S26216"/>
</dbReference>
<dbReference type="SMR" id="Q02154"/>
<dbReference type="GO" id="GO:0005737">
    <property type="term" value="C:cytoplasm"/>
    <property type="evidence" value="ECO:0007669"/>
    <property type="project" value="UniProtKB-SubCell"/>
</dbReference>
<dbReference type="GO" id="GO:0005524">
    <property type="term" value="F:ATP binding"/>
    <property type="evidence" value="ECO:0007669"/>
    <property type="project" value="UniProtKB-KW"/>
</dbReference>
<dbReference type="GO" id="GO:0004356">
    <property type="term" value="F:glutamine synthetase activity"/>
    <property type="evidence" value="ECO:0007669"/>
    <property type="project" value="UniProtKB-EC"/>
</dbReference>
<dbReference type="GO" id="GO:0046872">
    <property type="term" value="F:metal ion binding"/>
    <property type="evidence" value="ECO:0007669"/>
    <property type="project" value="UniProtKB-KW"/>
</dbReference>
<dbReference type="GO" id="GO:0006542">
    <property type="term" value="P:glutamine biosynthetic process"/>
    <property type="evidence" value="ECO:0007669"/>
    <property type="project" value="InterPro"/>
</dbReference>
<dbReference type="GO" id="GO:0009399">
    <property type="term" value="P:nitrogen fixation"/>
    <property type="evidence" value="ECO:0007669"/>
    <property type="project" value="UniProtKB-KW"/>
</dbReference>
<dbReference type="FunFam" id="3.30.590.10:FF:000011">
    <property type="entry name" value="Glutamine synthetase"/>
    <property type="match status" value="1"/>
</dbReference>
<dbReference type="Gene3D" id="3.10.20.70">
    <property type="entry name" value="Glutamine synthetase, N-terminal domain"/>
    <property type="match status" value="1"/>
</dbReference>
<dbReference type="Gene3D" id="3.30.590.10">
    <property type="entry name" value="Glutamine synthetase/guanido kinase, catalytic domain"/>
    <property type="match status" value="1"/>
</dbReference>
<dbReference type="InterPro" id="IPR008147">
    <property type="entry name" value="Gln_synt_N"/>
</dbReference>
<dbReference type="InterPro" id="IPR036651">
    <property type="entry name" value="Gln_synt_N_sf"/>
</dbReference>
<dbReference type="InterPro" id="IPR014746">
    <property type="entry name" value="Gln_synth/guanido_kin_cat_dom"/>
</dbReference>
<dbReference type="InterPro" id="IPR008146">
    <property type="entry name" value="Gln_synth_cat_dom"/>
</dbReference>
<dbReference type="InterPro" id="IPR027303">
    <property type="entry name" value="Gln_synth_gly_rich_site"/>
</dbReference>
<dbReference type="InterPro" id="IPR027302">
    <property type="entry name" value="Gln_synth_N_conserv_site"/>
</dbReference>
<dbReference type="InterPro" id="IPR050292">
    <property type="entry name" value="Glutamine_Synthetase"/>
</dbReference>
<dbReference type="PANTHER" id="PTHR20852">
    <property type="entry name" value="GLUTAMINE SYNTHETASE"/>
    <property type="match status" value="1"/>
</dbReference>
<dbReference type="PANTHER" id="PTHR20852:SF57">
    <property type="entry name" value="GLUTAMINE SYNTHETASE 2 CYTOPLASMIC"/>
    <property type="match status" value="1"/>
</dbReference>
<dbReference type="Pfam" id="PF00120">
    <property type="entry name" value="Gln-synt_C"/>
    <property type="match status" value="1"/>
</dbReference>
<dbReference type="Pfam" id="PF03951">
    <property type="entry name" value="Gln-synt_N"/>
    <property type="match status" value="1"/>
</dbReference>
<dbReference type="SMART" id="SM01230">
    <property type="entry name" value="Gln-synt_C"/>
    <property type="match status" value="1"/>
</dbReference>
<dbReference type="SUPFAM" id="SSF54368">
    <property type="entry name" value="Glutamine synthetase, N-terminal domain"/>
    <property type="match status" value="1"/>
</dbReference>
<dbReference type="SUPFAM" id="SSF55931">
    <property type="entry name" value="Glutamine synthetase/guanido kinase"/>
    <property type="match status" value="1"/>
</dbReference>
<dbReference type="PROSITE" id="PS00180">
    <property type="entry name" value="GLNA_1"/>
    <property type="match status" value="1"/>
</dbReference>
<dbReference type="PROSITE" id="PS00181">
    <property type="entry name" value="GLNA_ATP"/>
    <property type="match status" value="1"/>
</dbReference>
<dbReference type="PROSITE" id="PS51986">
    <property type="entry name" value="GS_BETA_GRASP"/>
    <property type="match status" value="1"/>
</dbReference>
<dbReference type="PROSITE" id="PS51987">
    <property type="entry name" value="GS_CATALYTIC"/>
    <property type="match status" value="1"/>
</dbReference>
<feature type="initiator methionine" description="Removed" evidence="7">
    <location>
        <position position="1"/>
    </location>
</feature>
<feature type="chain" id="PRO_0000153224" description="Glutamine synthetase">
    <location>
        <begin position="2"/>
        <end position="326"/>
    </location>
</feature>
<feature type="domain" description="GS beta-grasp" evidence="5">
    <location>
        <begin position="4"/>
        <end position="85"/>
    </location>
</feature>
<feature type="domain" description="GS catalytic" evidence="6">
    <location>
        <begin position="83"/>
        <end position="326"/>
    </location>
</feature>
<feature type="binding site" evidence="2">
    <location>
        <position position="107"/>
    </location>
    <ligand>
        <name>Mg(2+)</name>
        <dbReference type="ChEBI" id="CHEBI:18420"/>
    </ligand>
</feature>
<feature type="binding site" evidence="2">
    <location>
        <position position="109"/>
    </location>
    <ligand>
        <name>Mg(2+)</name>
        <dbReference type="ChEBI" id="CHEBI:18420"/>
    </ligand>
</feature>
<feature type="binding site" evidence="4">
    <location>
        <position position="164"/>
    </location>
    <ligand>
        <name>ATP</name>
        <dbReference type="ChEBI" id="CHEBI:30616"/>
    </ligand>
</feature>
<feature type="binding site" evidence="2">
    <location>
        <position position="169"/>
    </location>
    <ligand>
        <name>Mg(2+)</name>
        <dbReference type="ChEBI" id="CHEBI:18420"/>
    </ligand>
</feature>
<feature type="binding site" evidence="2">
    <location>
        <position position="176"/>
    </location>
    <ligand>
        <name>Mg(2+)</name>
        <dbReference type="ChEBI" id="CHEBI:18420"/>
    </ligand>
</feature>
<feature type="binding site" evidence="1">
    <location>
        <position position="275"/>
    </location>
    <ligand>
        <name>L-glutamate</name>
        <dbReference type="ChEBI" id="CHEBI:29985"/>
    </ligand>
</feature>
<organism>
    <name type="scientific">Rhizobium leguminosarum bv. phaseoli</name>
    <dbReference type="NCBI Taxonomy" id="385"/>
    <lineage>
        <taxon>Bacteria</taxon>
        <taxon>Pseudomonadati</taxon>
        <taxon>Pseudomonadota</taxon>
        <taxon>Alphaproteobacteria</taxon>
        <taxon>Hyphomicrobiales</taxon>
        <taxon>Rhizobiaceae</taxon>
        <taxon>Rhizobium/Agrobacterium group</taxon>
        <taxon>Rhizobium</taxon>
    </lineage>
</organism>
<name>GLNA2_RHILP</name>
<reference key="1">
    <citation type="journal article" date="1992" name="Mol. Gen. Genet.">
        <title>Activation of the Rhizobium leguminosarum glnII gene by NtrC is dependent on upstream DNA sequences.</title>
        <authorList>
            <person name="Patriarca E.J."/>
            <person name="Chiurazzi M."/>
            <person name="Manco G."/>
            <person name="Riccio A."/>
            <person name="Lamberti A."/>
            <person name="Paolis A."/>
            <person name="Rossi M."/>
            <person name="Defez R."/>
            <person name="Iaccarino M."/>
        </authorList>
    </citation>
    <scope>NUCLEOTIDE SEQUENCE [GENOMIC DNA]</scope>
    <scope>INDUCTION</scope>
    <source>
        <strain>LPR1105</strain>
    </source>
</reference>
<reference key="2">
    <citation type="journal article" date="1992" name="J. Gen. Microbiol.">
        <title>Dissociation by NH4Cl treatment of the enzymic activities of glutamine synthetase II from Rhizobium leguminosarum biovar viceae.</title>
        <authorList>
            <person name="Manco G."/>
            <person name="Rossi M."/>
            <person name="Defez R."/>
            <person name="Lamberti A."/>
            <person name="Percuoco G."/>
            <person name="Iaccarino M."/>
        </authorList>
    </citation>
    <scope>PROTEIN SEQUENCE OF 2-27</scope>
    <scope>FUNCTION</scope>
    <scope>ACTIVITY REGULATION</scope>
    <scope>SUBUNIT</scope>
    <source>
        <strain>LPR1105</strain>
    </source>
</reference>
<keyword id="KW-0067">ATP-binding</keyword>
<keyword id="KW-0963">Cytoplasm</keyword>
<keyword id="KW-0903">Direct protein sequencing</keyword>
<keyword id="KW-0436">Ligase</keyword>
<keyword id="KW-0460">Magnesium</keyword>
<keyword id="KW-0479">Metal-binding</keyword>
<keyword id="KW-0535">Nitrogen fixation</keyword>
<keyword id="KW-0547">Nucleotide-binding</keyword>
<protein>
    <recommendedName>
        <fullName evidence="9">Glutamine synthetase</fullName>
        <shortName evidence="9">GS</shortName>
        <ecNumber evidence="3">6.3.1.2</ecNumber>
    </recommendedName>
    <alternativeName>
        <fullName evidence="10">Glutamate--ammonia ligase</fullName>
    </alternativeName>
    <alternativeName>
        <fullName evidence="9">Glutamine synthetase II</fullName>
        <shortName evidence="9">GSII</shortName>
    </alternativeName>
</protein>
<gene>
    <name evidence="9" type="primary">glnII</name>
</gene>
<sequence>MTKFKLEYIWLDGYTPVPNLRGKTQIKEFDEFPTLEQLPLWGFDGSSTMQAEGSSDCVLKPVAIYPDPARTNGALVMCEVMMPDGHAHASNARATILDDEDAWFGFEQEYFFYQNGRPLGFPEQGYPAPQPYYTGVGYSNVGDVAREIVEEHLDLCLAAGINHEGINAEVAKGQWEFQIFGKGSKKAADQIWMARYLLQRLTEKYGIDIEYHCKPLGDTDWNGSGMHCNFSTKYLREVGGKEYFEALMASSDKNLMDHIAVYGPDNDKRLTGKHETAPWNKFSYGVADRGASIRVPHSFIKNDYKGYLEDRRPNSQGDPYQIVRRF</sequence>
<proteinExistence type="evidence at protein level"/>
<accession>Q02154</accession>
<accession>Q9R5J0</accession>
<evidence type="ECO:0000250" key="1">
    <source>
        <dbReference type="UniProtKB" id="P0A1P6"/>
    </source>
</evidence>
<evidence type="ECO:0000250" key="2">
    <source>
        <dbReference type="UniProtKB" id="P12425"/>
    </source>
</evidence>
<evidence type="ECO:0000250" key="3">
    <source>
        <dbReference type="UniProtKB" id="P16580"/>
    </source>
</evidence>
<evidence type="ECO:0000250" key="4">
    <source>
        <dbReference type="UniProtKB" id="P9WN39"/>
    </source>
</evidence>
<evidence type="ECO:0000255" key="5">
    <source>
        <dbReference type="PROSITE-ProRule" id="PRU01330"/>
    </source>
</evidence>
<evidence type="ECO:0000255" key="6">
    <source>
        <dbReference type="PROSITE-ProRule" id="PRU01331"/>
    </source>
</evidence>
<evidence type="ECO:0000269" key="7">
    <source>
    </source>
</evidence>
<evidence type="ECO:0000269" key="8">
    <source>
    </source>
</evidence>
<evidence type="ECO:0000303" key="9">
    <source>
    </source>
</evidence>
<evidence type="ECO:0000305" key="10"/>
<evidence type="ECO:0000305" key="11">
    <source>
    </source>
</evidence>
<evidence type="ECO:0000305" key="12">
    <source>
    </source>
</evidence>
<comment type="function">
    <text evidence="11">Catalyzes the ATP-dependent biosynthesis of glutamine from glutamate and ammonia.</text>
</comment>
<comment type="catalytic activity">
    <reaction evidence="3">
        <text>L-glutamate + NH4(+) + ATP = L-glutamine + ADP + phosphate + H(+)</text>
        <dbReference type="Rhea" id="RHEA:16169"/>
        <dbReference type="ChEBI" id="CHEBI:15378"/>
        <dbReference type="ChEBI" id="CHEBI:28938"/>
        <dbReference type="ChEBI" id="CHEBI:29985"/>
        <dbReference type="ChEBI" id="CHEBI:30616"/>
        <dbReference type="ChEBI" id="CHEBI:43474"/>
        <dbReference type="ChEBI" id="CHEBI:58359"/>
        <dbReference type="ChEBI" id="CHEBI:456216"/>
        <dbReference type="EC" id="6.3.1.2"/>
    </reaction>
</comment>
<comment type="cofactor">
    <cofactor evidence="3">
        <name>Mg(2+)</name>
        <dbReference type="ChEBI" id="CHEBI:18420"/>
    </cofactor>
</comment>
<comment type="activity regulation">
    <text evidence="7">Transferase activity is inhibited by NH(4)Cl.</text>
</comment>
<comment type="subunit">
    <text evidence="7">Homooctamer and homotetramer.</text>
</comment>
<comment type="subcellular location">
    <subcellularLocation>
        <location evidence="3">Cytoplasm</location>
    </subcellularLocation>
</comment>
<comment type="induction">
    <text evidence="8">Up-regulated by the nitrogen regulatory protein NtrC.</text>
</comment>
<comment type="miscellaneous">
    <text evidence="12">Two forms of glutamine synthetase (GSI and GSII) can be found in this nitrogen fixing bacteria, GSI is a typical prokaryotic glutamine synthetase whereas GSII is similar to the eukaryotic enzyme.</text>
</comment>
<comment type="similarity">
    <text evidence="10">Belongs to the glutamine synthetase family.</text>
</comment>